<name>Y9327_DICDI</name>
<accession>Q86KR1</accession>
<accession>Q54ZC4</accession>
<comment type="subcellular location">
    <subcellularLocation>
        <location evidence="3">Membrane</location>
        <topology evidence="3">Single-pass membrane protein</topology>
    </subcellularLocation>
</comment>
<dbReference type="EMBL" id="AAFI02000020">
    <property type="protein sequence ID" value="EAL68620.1"/>
    <property type="molecule type" value="Genomic_DNA"/>
</dbReference>
<dbReference type="RefSeq" id="XP_642573.1">
    <property type="nucleotide sequence ID" value="XM_637481.1"/>
</dbReference>
<dbReference type="SMR" id="Q86KR1"/>
<dbReference type="GlyGen" id="Q86KR1">
    <property type="glycosylation" value="2 sites"/>
</dbReference>
<dbReference type="PaxDb" id="44689-DDB0169327"/>
<dbReference type="EnsemblProtists" id="EAL68620">
    <property type="protein sequence ID" value="EAL68620"/>
    <property type="gene ID" value="DDB_G0277605"/>
</dbReference>
<dbReference type="GeneID" id="8621136"/>
<dbReference type="KEGG" id="ddi:DDB_G0277605"/>
<dbReference type="dictyBase" id="DDB_G0277605"/>
<dbReference type="VEuPathDB" id="AmoebaDB:DDB_G0277605"/>
<dbReference type="HOGENOM" id="CLU_1707546_0_0_1"/>
<dbReference type="InParanoid" id="Q86KR1"/>
<dbReference type="PRO" id="PR:Q86KR1"/>
<dbReference type="Proteomes" id="UP000002195">
    <property type="component" value="Chromosome 2"/>
</dbReference>
<dbReference type="GO" id="GO:0016020">
    <property type="term" value="C:membrane"/>
    <property type="evidence" value="ECO:0007669"/>
    <property type="project" value="UniProtKB-SubCell"/>
</dbReference>
<proteinExistence type="predicted"/>
<gene>
    <name type="ORF">DDB_G0277605</name>
</gene>
<feature type="chain" id="PRO_0000348186" description="Uncharacterized protein DDB_G0277605">
    <location>
        <begin position="1"/>
        <end position="154"/>
    </location>
</feature>
<feature type="transmembrane region" description="Helical" evidence="1">
    <location>
        <begin position="116"/>
        <end position="136"/>
    </location>
</feature>
<feature type="region of interest" description="Disordered" evidence="2">
    <location>
        <begin position="1"/>
        <end position="37"/>
    </location>
</feature>
<feature type="compositionally biased region" description="Low complexity" evidence="2">
    <location>
        <begin position="12"/>
        <end position="37"/>
    </location>
</feature>
<feature type="glycosylation site" description="N-linked (GlcNAc...) asparagine" evidence="1">
    <location>
        <position position="82"/>
    </location>
</feature>
<feature type="glycosylation site" description="N-linked (GlcNAc...) asparagine" evidence="1">
    <location>
        <position position="149"/>
    </location>
</feature>
<keyword id="KW-0325">Glycoprotein</keyword>
<keyword id="KW-0472">Membrane</keyword>
<keyword id="KW-1185">Reference proteome</keyword>
<keyword id="KW-0812">Transmembrane</keyword>
<keyword id="KW-1133">Transmembrane helix</keyword>
<organism>
    <name type="scientific">Dictyostelium discoideum</name>
    <name type="common">Social amoeba</name>
    <dbReference type="NCBI Taxonomy" id="44689"/>
    <lineage>
        <taxon>Eukaryota</taxon>
        <taxon>Amoebozoa</taxon>
        <taxon>Evosea</taxon>
        <taxon>Eumycetozoa</taxon>
        <taxon>Dictyostelia</taxon>
        <taxon>Dictyosteliales</taxon>
        <taxon>Dictyosteliaceae</taxon>
        <taxon>Dictyostelium</taxon>
    </lineage>
</organism>
<evidence type="ECO:0000255" key="1"/>
<evidence type="ECO:0000256" key="2">
    <source>
        <dbReference type="SAM" id="MobiDB-lite"/>
    </source>
</evidence>
<evidence type="ECO:0000305" key="3"/>
<reference key="1">
    <citation type="journal article" date="2002" name="Nature">
        <title>Sequence and analysis of chromosome 2 of Dictyostelium discoideum.</title>
        <authorList>
            <person name="Gloeckner G."/>
            <person name="Eichinger L."/>
            <person name="Szafranski K."/>
            <person name="Pachebat J.A."/>
            <person name="Bankier A.T."/>
            <person name="Dear P.H."/>
            <person name="Lehmann R."/>
            <person name="Baumgart C."/>
            <person name="Parra G."/>
            <person name="Abril J.F."/>
            <person name="Guigo R."/>
            <person name="Kumpf K."/>
            <person name="Tunggal B."/>
            <person name="Cox E.C."/>
            <person name="Quail M.A."/>
            <person name="Platzer M."/>
            <person name="Rosenthal A."/>
            <person name="Noegel A.A."/>
        </authorList>
    </citation>
    <scope>NUCLEOTIDE SEQUENCE [LARGE SCALE GENOMIC DNA]</scope>
    <source>
        <strain>AX4</strain>
    </source>
</reference>
<reference key="2">
    <citation type="journal article" date="2005" name="Nature">
        <title>The genome of the social amoeba Dictyostelium discoideum.</title>
        <authorList>
            <person name="Eichinger L."/>
            <person name="Pachebat J.A."/>
            <person name="Gloeckner G."/>
            <person name="Rajandream M.A."/>
            <person name="Sucgang R."/>
            <person name="Berriman M."/>
            <person name="Song J."/>
            <person name="Olsen R."/>
            <person name="Szafranski K."/>
            <person name="Xu Q."/>
            <person name="Tunggal B."/>
            <person name="Kummerfeld S."/>
            <person name="Madera M."/>
            <person name="Konfortov B.A."/>
            <person name="Rivero F."/>
            <person name="Bankier A.T."/>
            <person name="Lehmann R."/>
            <person name="Hamlin N."/>
            <person name="Davies R."/>
            <person name="Gaudet P."/>
            <person name="Fey P."/>
            <person name="Pilcher K."/>
            <person name="Chen G."/>
            <person name="Saunders D."/>
            <person name="Sodergren E.J."/>
            <person name="Davis P."/>
            <person name="Kerhornou A."/>
            <person name="Nie X."/>
            <person name="Hall N."/>
            <person name="Anjard C."/>
            <person name="Hemphill L."/>
            <person name="Bason N."/>
            <person name="Farbrother P."/>
            <person name="Desany B."/>
            <person name="Just E."/>
            <person name="Morio T."/>
            <person name="Rost R."/>
            <person name="Churcher C.M."/>
            <person name="Cooper J."/>
            <person name="Haydock S."/>
            <person name="van Driessche N."/>
            <person name="Cronin A."/>
            <person name="Goodhead I."/>
            <person name="Muzny D.M."/>
            <person name="Mourier T."/>
            <person name="Pain A."/>
            <person name="Lu M."/>
            <person name="Harper D."/>
            <person name="Lindsay R."/>
            <person name="Hauser H."/>
            <person name="James K.D."/>
            <person name="Quiles M."/>
            <person name="Madan Babu M."/>
            <person name="Saito T."/>
            <person name="Buchrieser C."/>
            <person name="Wardroper A."/>
            <person name="Felder M."/>
            <person name="Thangavelu M."/>
            <person name="Johnson D."/>
            <person name="Knights A."/>
            <person name="Loulseged H."/>
            <person name="Mungall K.L."/>
            <person name="Oliver K."/>
            <person name="Price C."/>
            <person name="Quail M.A."/>
            <person name="Urushihara H."/>
            <person name="Hernandez J."/>
            <person name="Rabbinowitsch E."/>
            <person name="Steffen D."/>
            <person name="Sanders M."/>
            <person name="Ma J."/>
            <person name="Kohara Y."/>
            <person name="Sharp S."/>
            <person name="Simmonds M.N."/>
            <person name="Spiegler S."/>
            <person name="Tivey A."/>
            <person name="Sugano S."/>
            <person name="White B."/>
            <person name="Walker D."/>
            <person name="Woodward J.R."/>
            <person name="Winckler T."/>
            <person name="Tanaka Y."/>
            <person name="Shaulsky G."/>
            <person name="Schleicher M."/>
            <person name="Weinstock G.M."/>
            <person name="Rosenthal A."/>
            <person name="Cox E.C."/>
            <person name="Chisholm R.L."/>
            <person name="Gibbs R.A."/>
            <person name="Loomis W.F."/>
            <person name="Platzer M."/>
            <person name="Kay R.R."/>
            <person name="Williams J.G."/>
            <person name="Dear P.H."/>
            <person name="Noegel A.A."/>
            <person name="Barrell B.G."/>
            <person name="Kuspa A."/>
        </authorList>
    </citation>
    <scope>NUCLEOTIDE SEQUENCE [LARGE SCALE GENOMIC DNA]</scope>
    <source>
        <strain>AX4</strain>
    </source>
</reference>
<protein>
    <recommendedName>
        <fullName>Uncharacterized protein DDB_G0277605</fullName>
    </recommendedName>
</protein>
<sequence>MDNLKEKPLSYNINNNNLNNNNNNNNNNNNNNNNINNNINNNNFKYVSFSESLEDIGYQNQYIIDKDEDYYIQEQRYIRQNNQSDDEEDFNNNNYEDSIKISLIQKSFIKNKKNKIIITTIVVLLMIAVSLGLILAWQGVFDQIHNNNNNSKDE</sequence>